<protein>
    <recommendedName>
        <fullName evidence="1">Large ribosomal subunit protein bL36c</fullName>
    </recommendedName>
    <alternativeName>
        <fullName evidence="2">50S ribosomal protein L36, chloroplastic</fullName>
    </alternativeName>
</protein>
<keyword id="KW-0150">Chloroplast</keyword>
<keyword id="KW-0934">Plastid</keyword>
<keyword id="KW-0687">Ribonucleoprotein</keyword>
<keyword id="KW-0689">Ribosomal protein</keyword>
<name>RK36_PHAAN</name>
<gene>
    <name evidence="1" type="primary">rpl36</name>
</gene>
<sequence>MKINASVRKICEKCRLIRRRGRIIVICFNPKHKQRQG</sequence>
<proteinExistence type="inferred from homology"/>
<geneLocation type="chloroplast"/>
<organism>
    <name type="scientific">Phaseolus angularis</name>
    <name type="common">Azuki bean</name>
    <name type="synonym">Vigna angularis</name>
    <dbReference type="NCBI Taxonomy" id="3914"/>
    <lineage>
        <taxon>Eukaryota</taxon>
        <taxon>Viridiplantae</taxon>
        <taxon>Streptophyta</taxon>
        <taxon>Embryophyta</taxon>
        <taxon>Tracheophyta</taxon>
        <taxon>Spermatophyta</taxon>
        <taxon>Magnoliopsida</taxon>
        <taxon>eudicotyledons</taxon>
        <taxon>Gunneridae</taxon>
        <taxon>Pentapetalae</taxon>
        <taxon>rosids</taxon>
        <taxon>fabids</taxon>
        <taxon>Fabales</taxon>
        <taxon>Fabaceae</taxon>
        <taxon>Papilionoideae</taxon>
        <taxon>50 kb inversion clade</taxon>
        <taxon>NPAAA clade</taxon>
        <taxon>indigoferoid/millettioid clade</taxon>
        <taxon>Phaseoleae</taxon>
        <taxon>Vigna</taxon>
    </lineage>
</organism>
<evidence type="ECO:0000255" key="1">
    <source>
        <dbReference type="HAMAP-Rule" id="MF_00251"/>
    </source>
</evidence>
<evidence type="ECO:0000305" key="2"/>
<comment type="subcellular location">
    <subcellularLocation>
        <location>Plastid</location>
        <location>Chloroplast</location>
    </subcellularLocation>
</comment>
<comment type="similarity">
    <text evidence="1">Belongs to the bacterial ribosomal protein bL36 family.</text>
</comment>
<dbReference type="EMBL" id="AF536226">
    <property type="protein sequence ID" value="AAN04896.1"/>
    <property type="molecule type" value="Genomic_DNA"/>
</dbReference>
<dbReference type="RefSeq" id="YP_007889758.1">
    <property type="nucleotide sequence ID" value="NC_021091.1"/>
</dbReference>
<dbReference type="SMR" id="Q8MCA1"/>
<dbReference type="GeneID" id="15382688"/>
<dbReference type="KEGG" id="var:15382688"/>
<dbReference type="GO" id="GO:0009507">
    <property type="term" value="C:chloroplast"/>
    <property type="evidence" value="ECO:0007669"/>
    <property type="project" value="UniProtKB-SubCell"/>
</dbReference>
<dbReference type="GO" id="GO:1990904">
    <property type="term" value="C:ribonucleoprotein complex"/>
    <property type="evidence" value="ECO:0007669"/>
    <property type="project" value="UniProtKB-KW"/>
</dbReference>
<dbReference type="GO" id="GO:0005840">
    <property type="term" value="C:ribosome"/>
    <property type="evidence" value="ECO:0007669"/>
    <property type="project" value="UniProtKB-KW"/>
</dbReference>
<dbReference type="GO" id="GO:0003735">
    <property type="term" value="F:structural constituent of ribosome"/>
    <property type="evidence" value="ECO:0007669"/>
    <property type="project" value="InterPro"/>
</dbReference>
<dbReference type="GO" id="GO:0006412">
    <property type="term" value="P:translation"/>
    <property type="evidence" value="ECO:0007669"/>
    <property type="project" value="UniProtKB-UniRule"/>
</dbReference>
<dbReference type="HAMAP" id="MF_00251">
    <property type="entry name" value="Ribosomal_bL36"/>
    <property type="match status" value="1"/>
</dbReference>
<dbReference type="InterPro" id="IPR000473">
    <property type="entry name" value="Ribosomal_bL36"/>
</dbReference>
<dbReference type="InterPro" id="IPR035977">
    <property type="entry name" value="Ribosomal_bL36_sp"/>
</dbReference>
<dbReference type="NCBIfam" id="TIGR01022">
    <property type="entry name" value="rpmJ_bact"/>
    <property type="match status" value="1"/>
</dbReference>
<dbReference type="PANTHER" id="PTHR42888">
    <property type="entry name" value="50S RIBOSOMAL PROTEIN L36, CHLOROPLASTIC"/>
    <property type="match status" value="1"/>
</dbReference>
<dbReference type="PANTHER" id="PTHR42888:SF1">
    <property type="entry name" value="LARGE RIBOSOMAL SUBUNIT PROTEIN BL36C"/>
    <property type="match status" value="1"/>
</dbReference>
<dbReference type="Pfam" id="PF00444">
    <property type="entry name" value="Ribosomal_L36"/>
    <property type="match status" value="1"/>
</dbReference>
<dbReference type="SUPFAM" id="SSF57840">
    <property type="entry name" value="Ribosomal protein L36"/>
    <property type="match status" value="1"/>
</dbReference>
<dbReference type="PROSITE" id="PS00828">
    <property type="entry name" value="RIBOSOMAL_L36"/>
    <property type="match status" value="1"/>
</dbReference>
<feature type="chain" id="PRO_0000126337" description="Large ribosomal subunit protein bL36c">
    <location>
        <begin position="1"/>
        <end position="37"/>
    </location>
</feature>
<reference key="1">
    <citation type="journal article" date="2002" name="DNA Res.">
        <title>Evolutionary re-organisation of a large operon in adzuki bean chloroplast DNA caused by inverted repeat movement.</title>
        <authorList>
            <person name="Perry A.S."/>
            <person name="Brennan S."/>
            <person name="Murphy D.J."/>
            <person name="Kavanagh T.A."/>
            <person name="Wolfe K.H."/>
        </authorList>
    </citation>
    <scope>NUCLEOTIDE SEQUENCE [GENOMIC DNA]</scope>
    <source>
        <strain>cv. Erimo-shozu</strain>
    </source>
</reference>
<accession>Q8MCA1</accession>